<keyword id="KW-0067">ATP-binding</keyword>
<keyword id="KW-0963">Cytoplasm</keyword>
<keyword id="KW-0460">Magnesium</keyword>
<keyword id="KW-0479">Metal-binding</keyword>
<keyword id="KW-0547">Nucleotide-binding</keyword>
<keyword id="KW-0554">One-carbon metabolism</keyword>
<keyword id="KW-0630">Potassium</keyword>
<keyword id="KW-1185">Reference proteome</keyword>
<keyword id="KW-0808">Transferase</keyword>
<sequence>MTDKAAQAVRLFTSESVTEGHPDKICDAISDAILDALLEEDPDAHVAVETLVTTGQVHVVGEVRTSGYVEIPQIVRKTLVEIGFTSSDVGFDGHTCGVNVAIGEQSQEIGAGVDASTEVRSGTFEDDDQYGAGDQGLMFGYATNETPEFMPLPISTAHHLSRRLTHVRKEGIVPSLRPDGKTQVTFAYDENDVPTRLETIVISTQHDPEVTQEWLAEQLRTHVVEWVVNDADLSQYYTEDTELLINPSGSFILGGPMGDAGLTGRKIIVDTYGGMARHGGGAFSGKDPSKVDRSAAYAMRWVAKNIVAAGLADRAEVQVAYAIGRAKPVGLYVETFGTAHEGLSDADIQAAVNKVFDLRPAAIIRELDLQRPIYRQTAAYGHFGRTDVELPWEDTSRADDLRRAAGL</sequence>
<organism>
    <name type="scientific">Corynebacterium aurimucosum (strain ATCC 700975 / DSM 44827 / CIP 107346 / CN-1)</name>
    <name type="common">Corynebacterium nigricans</name>
    <dbReference type="NCBI Taxonomy" id="548476"/>
    <lineage>
        <taxon>Bacteria</taxon>
        <taxon>Bacillati</taxon>
        <taxon>Actinomycetota</taxon>
        <taxon>Actinomycetes</taxon>
        <taxon>Mycobacteriales</taxon>
        <taxon>Corynebacteriaceae</taxon>
        <taxon>Corynebacterium</taxon>
    </lineage>
</organism>
<comment type="function">
    <text evidence="1">Catalyzes the formation of S-adenosylmethionine (AdoMet) from methionine and ATP. The overall synthetic reaction is composed of two sequential steps, AdoMet formation and the subsequent tripolyphosphate hydrolysis which occurs prior to release of AdoMet from the enzyme.</text>
</comment>
<comment type="catalytic activity">
    <reaction evidence="1">
        <text>L-methionine + ATP + H2O = S-adenosyl-L-methionine + phosphate + diphosphate</text>
        <dbReference type="Rhea" id="RHEA:21080"/>
        <dbReference type="ChEBI" id="CHEBI:15377"/>
        <dbReference type="ChEBI" id="CHEBI:30616"/>
        <dbReference type="ChEBI" id="CHEBI:33019"/>
        <dbReference type="ChEBI" id="CHEBI:43474"/>
        <dbReference type="ChEBI" id="CHEBI:57844"/>
        <dbReference type="ChEBI" id="CHEBI:59789"/>
        <dbReference type="EC" id="2.5.1.6"/>
    </reaction>
</comment>
<comment type="cofactor">
    <cofactor evidence="1">
        <name>Mg(2+)</name>
        <dbReference type="ChEBI" id="CHEBI:18420"/>
    </cofactor>
    <text evidence="1">Binds 2 divalent ions per subunit.</text>
</comment>
<comment type="cofactor">
    <cofactor evidence="1">
        <name>K(+)</name>
        <dbReference type="ChEBI" id="CHEBI:29103"/>
    </cofactor>
    <text evidence="1">Binds 1 potassium ion per subunit.</text>
</comment>
<comment type="pathway">
    <text evidence="1">Amino-acid biosynthesis; S-adenosyl-L-methionine biosynthesis; S-adenosyl-L-methionine from L-methionine: step 1/1.</text>
</comment>
<comment type="subunit">
    <text evidence="1">Homotetramer; dimer of dimers.</text>
</comment>
<comment type="subcellular location">
    <subcellularLocation>
        <location evidence="1">Cytoplasm</location>
    </subcellularLocation>
</comment>
<comment type="similarity">
    <text evidence="1">Belongs to the AdoMet synthase family.</text>
</comment>
<gene>
    <name evidence="1" type="primary">metK</name>
    <name type="ordered locus">cauri_1185</name>
</gene>
<name>METK_CORA7</name>
<feature type="chain" id="PRO_1000196699" description="S-adenosylmethionine synthase">
    <location>
        <begin position="1"/>
        <end position="407"/>
    </location>
</feature>
<feature type="region of interest" description="Flexible loop" evidence="1">
    <location>
        <begin position="105"/>
        <end position="115"/>
    </location>
</feature>
<feature type="binding site" description="in other chain" evidence="1">
    <location>
        <position position="21"/>
    </location>
    <ligand>
        <name>ATP</name>
        <dbReference type="ChEBI" id="CHEBI:30616"/>
        <note>ligand shared between two neighboring subunits</note>
    </ligand>
</feature>
<feature type="binding site" evidence="1">
    <location>
        <position position="23"/>
    </location>
    <ligand>
        <name>Mg(2+)</name>
        <dbReference type="ChEBI" id="CHEBI:18420"/>
    </ligand>
</feature>
<feature type="binding site" evidence="1">
    <location>
        <position position="49"/>
    </location>
    <ligand>
        <name>K(+)</name>
        <dbReference type="ChEBI" id="CHEBI:29103"/>
    </ligand>
</feature>
<feature type="binding site" description="in other chain" evidence="1">
    <location>
        <position position="62"/>
    </location>
    <ligand>
        <name>L-methionine</name>
        <dbReference type="ChEBI" id="CHEBI:57844"/>
        <note>ligand shared between two neighboring subunits</note>
    </ligand>
</feature>
<feature type="binding site" description="in other chain" evidence="1">
    <location>
        <position position="105"/>
    </location>
    <ligand>
        <name>L-methionine</name>
        <dbReference type="ChEBI" id="CHEBI:57844"/>
        <note>ligand shared between two neighboring subunits</note>
    </ligand>
</feature>
<feature type="binding site" description="in other chain" evidence="1">
    <location>
        <begin position="179"/>
        <end position="181"/>
    </location>
    <ligand>
        <name>ATP</name>
        <dbReference type="ChEBI" id="CHEBI:30616"/>
        <note>ligand shared between two neighboring subunits</note>
    </ligand>
</feature>
<feature type="binding site" evidence="1">
    <location>
        <position position="259"/>
    </location>
    <ligand>
        <name>ATP</name>
        <dbReference type="ChEBI" id="CHEBI:30616"/>
        <note>ligand shared between two neighboring subunits</note>
    </ligand>
</feature>
<feature type="binding site" evidence="1">
    <location>
        <position position="259"/>
    </location>
    <ligand>
        <name>L-methionine</name>
        <dbReference type="ChEBI" id="CHEBI:57844"/>
        <note>ligand shared between two neighboring subunits</note>
    </ligand>
</feature>
<feature type="binding site" description="in other chain" evidence="1">
    <location>
        <begin position="265"/>
        <end position="266"/>
    </location>
    <ligand>
        <name>ATP</name>
        <dbReference type="ChEBI" id="CHEBI:30616"/>
        <note>ligand shared between two neighboring subunits</note>
    </ligand>
</feature>
<feature type="binding site" evidence="1">
    <location>
        <position position="282"/>
    </location>
    <ligand>
        <name>ATP</name>
        <dbReference type="ChEBI" id="CHEBI:30616"/>
        <note>ligand shared between two neighboring subunits</note>
    </ligand>
</feature>
<feature type="binding site" evidence="1">
    <location>
        <position position="286"/>
    </location>
    <ligand>
        <name>ATP</name>
        <dbReference type="ChEBI" id="CHEBI:30616"/>
        <note>ligand shared between two neighboring subunits</note>
    </ligand>
</feature>
<feature type="binding site" description="in other chain" evidence="1">
    <location>
        <position position="290"/>
    </location>
    <ligand>
        <name>L-methionine</name>
        <dbReference type="ChEBI" id="CHEBI:57844"/>
        <note>ligand shared between two neighboring subunits</note>
    </ligand>
</feature>
<proteinExistence type="inferred from homology"/>
<protein>
    <recommendedName>
        <fullName evidence="1">S-adenosylmethionine synthase</fullName>
        <shortName evidence="1">AdoMet synthase</shortName>
        <ecNumber evidence="1">2.5.1.6</ecNumber>
    </recommendedName>
    <alternativeName>
        <fullName evidence="1">MAT</fullName>
    </alternativeName>
    <alternativeName>
        <fullName evidence="1">Methionine adenosyltransferase</fullName>
    </alternativeName>
</protein>
<reference key="1">
    <citation type="journal article" date="2010" name="BMC Genomics">
        <title>Complete genome sequence and lifestyle of black-pigmented Corynebacterium aurimucosum ATCC 700975 (formerly C. nigricans CN-1) isolated from a vaginal swab of a woman with spontaneous abortion.</title>
        <authorList>
            <person name="Trost E."/>
            <person name="Gotker S."/>
            <person name="Schneider J."/>
            <person name="Schneiker-Bekel S."/>
            <person name="Szczepanowski R."/>
            <person name="Tilker A."/>
            <person name="Viehoever P."/>
            <person name="Arnold W."/>
            <person name="Bekel T."/>
            <person name="Blom J."/>
            <person name="Gartemann K.H."/>
            <person name="Linke B."/>
            <person name="Goesmann A."/>
            <person name="Puhler A."/>
            <person name="Shukla S.K."/>
            <person name="Tauch A."/>
        </authorList>
    </citation>
    <scope>NUCLEOTIDE SEQUENCE [LARGE SCALE GENOMIC DNA]</scope>
    <source>
        <strain>ATCC 700975 / DSM 44827 / CIP 107346 / CN-1</strain>
    </source>
</reference>
<dbReference type="EC" id="2.5.1.6" evidence="1"/>
<dbReference type="EMBL" id="CP001601">
    <property type="protein sequence ID" value="ACP32778.1"/>
    <property type="molecule type" value="Genomic_DNA"/>
</dbReference>
<dbReference type="RefSeq" id="WP_010186797.1">
    <property type="nucleotide sequence ID" value="NC_012590.1"/>
</dbReference>
<dbReference type="SMR" id="C3PG24"/>
<dbReference type="STRING" id="548476.cauri_1185"/>
<dbReference type="GeneID" id="31923808"/>
<dbReference type="KEGG" id="car:cauri_1185"/>
<dbReference type="eggNOG" id="COG0192">
    <property type="taxonomic scope" value="Bacteria"/>
</dbReference>
<dbReference type="HOGENOM" id="CLU_041802_1_1_11"/>
<dbReference type="OrthoDB" id="9801686at2"/>
<dbReference type="UniPathway" id="UPA00315">
    <property type="reaction ID" value="UER00080"/>
</dbReference>
<dbReference type="Proteomes" id="UP000002077">
    <property type="component" value="Chromosome"/>
</dbReference>
<dbReference type="GO" id="GO:0005737">
    <property type="term" value="C:cytoplasm"/>
    <property type="evidence" value="ECO:0007669"/>
    <property type="project" value="UniProtKB-SubCell"/>
</dbReference>
<dbReference type="GO" id="GO:0005524">
    <property type="term" value="F:ATP binding"/>
    <property type="evidence" value="ECO:0007669"/>
    <property type="project" value="UniProtKB-UniRule"/>
</dbReference>
<dbReference type="GO" id="GO:0000287">
    <property type="term" value="F:magnesium ion binding"/>
    <property type="evidence" value="ECO:0007669"/>
    <property type="project" value="UniProtKB-UniRule"/>
</dbReference>
<dbReference type="GO" id="GO:0004478">
    <property type="term" value="F:methionine adenosyltransferase activity"/>
    <property type="evidence" value="ECO:0007669"/>
    <property type="project" value="UniProtKB-UniRule"/>
</dbReference>
<dbReference type="GO" id="GO:0006730">
    <property type="term" value="P:one-carbon metabolic process"/>
    <property type="evidence" value="ECO:0007669"/>
    <property type="project" value="UniProtKB-KW"/>
</dbReference>
<dbReference type="GO" id="GO:0006556">
    <property type="term" value="P:S-adenosylmethionine biosynthetic process"/>
    <property type="evidence" value="ECO:0007669"/>
    <property type="project" value="UniProtKB-UniRule"/>
</dbReference>
<dbReference type="CDD" id="cd18079">
    <property type="entry name" value="S-AdoMet_synt"/>
    <property type="match status" value="1"/>
</dbReference>
<dbReference type="FunFam" id="3.30.300.10:FF:000003">
    <property type="entry name" value="S-adenosylmethionine synthase"/>
    <property type="match status" value="1"/>
</dbReference>
<dbReference type="Gene3D" id="3.30.300.10">
    <property type="match status" value="3"/>
</dbReference>
<dbReference type="HAMAP" id="MF_00086">
    <property type="entry name" value="S_AdoMet_synth1"/>
    <property type="match status" value="1"/>
</dbReference>
<dbReference type="InterPro" id="IPR022631">
    <property type="entry name" value="ADOMET_SYNTHASE_CS"/>
</dbReference>
<dbReference type="InterPro" id="IPR022630">
    <property type="entry name" value="S-AdoMet_synt_C"/>
</dbReference>
<dbReference type="InterPro" id="IPR022629">
    <property type="entry name" value="S-AdoMet_synt_central"/>
</dbReference>
<dbReference type="InterPro" id="IPR022628">
    <property type="entry name" value="S-AdoMet_synt_N"/>
</dbReference>
<dbReference type="InterPro" id="IPR002133">
    <property type="entry name" value="S-AdoMet_synthetase"/>
</dbReference>
<dbReference type="InterPro" id="IPR022636">
    <property type="entry name" value="S-AdoMet_synthetase_sfam"/>
</dbReference>
<dbReference type="NCBIfam" id="TIGR01034">
    <property type="entry name" value="metK"/>
    <property type="match status" value="1"/>
</dbReference>
<dbReference type="PANTHER" id="PTHR11964">
    <property type="entry name" value="S-ADENOSYLMETHIONINE SYNTHETASE"/>
    <property type="match status" value="1"/>
</dbReference>
<dbReference type="Pfam" id="PF02773">
    <property type="entry name" value="S-AdoMet_synt_C"/>
    <property type="match status" value="1"/>
</dbReference>
<dbReference type="Pfam" id="PF02772">
    <property type="entry name" value="S-AdoMet_synt_M"/>
    <property type="match status" value="1"/>
</dbReference>
<dbReference type="Pfam" id="PF00438">
    <property type="entry name" value="S-AdoMet_synt_N"/>
    <property type="match status" value="1"/>
</dbReference>
<dbReference type="PIRSF" id="PIRSF000497">
    <property type="entry name" value="MAT"/>
    <property type="match status" value="1"/>
</dbReference>
<dbReference type="SUPFAM" id="SSF55973">
    <property type="entry name" value="S-adenosylmethionine synthetase"/>
    <property type="match status" value="3"/>
</dbReference>
<dbReference type="PROSITE" id="PS00376">
    <property type="entry name" value="ADOMET_SYNTHASE_1"/>
    <property type="match status" value="1"/>
</dbReference>
<dbReference type="PROSITE" id="PS00377">
    <property type="entry name" value="ADOMET_SYNTHASE_2"/>
    <property type="match status" value="1"/>
</dbReference>
<evidence type="ECO:0000255" key="1">
    <source>
        <dbReference type="HAMAP-Rule" id="MF_00086"/>
    </source>
</evidence>
<accession>C3PG24</accession>